<sequence length="1353" mass="153591">MSDNRLFTSVETLNLSSPVLEKLKLSGINTLEDFNTFTLEELRLLLQEAFLEVLPILKNFALPRNLQNLDLSEAVINILTELGMEDFQDLLQTKMAVLTKAFETNPLAFQKLNDLFKLYNHFPSISSDKEYGSRDYDYFKIRLAAPEEIRQWSYGEVTSYETINYRTYKPEISGLFCQKIFGPVVDFQCACSKKQVSIKSQFCNKCGVEFTETKVRRERMGHIELQTPIVHTWYLNSSPSRLAILLNIKTKQLEEIVYYVSYVVIDPGKTEFKPKEIITETQYSEALYEFGNAFVALTGAEAVKKLLENLNLEKTIKVLRKSLSENSKQKRESIIKRLEIIESFHQSDNKPEWMVMDVIPVLPPGLRPMVPLDGGRFATTEVNDLYRRILNRNNRLKKQMLQKAPRLIIKNEKRMLQEAVDALFDNAKTSKKNVNNVEKNRPLKSLSEMLRGKQGRFRQNLLGKRVDYSGRSVIIVGPDLEMHQCGVPREMAIILFKPFILKKLQETKGIDKKNANTIYEKMNEEVWNALEEVVKEHPVLLNRAPTLHRLGIQAFDPKLIDGKAIRLHPLVTPAFNADFDGDQMAIYVPLSLEAQAEARLLMLVSNNILDPKNGNPVVTPSQDMVLGNYYLTIEEKKDRTINSYDAAQRTAEHQYKHRNEGAFFADINEAKTAYQNKEIHLHTRIFIKPQAINLSFTEEQRQKYLMTTLGKLIFNDILPPSFPYINEPTQFNLDVKTPDAYFLAPGTNPKQFLKKLPTPKPFNKKFLSMIIACFFKQMKITETSKMLDHIKNLGFKYSTIAGITVSFADINTYSNKQELLQEVEARNIQIETWYNDGFLTDAERRRLVINEWKNIRDEIQEGLMKEFQQDNHIFMMSESGARGSVSNFTQLAGMRGLMNNPKGEIIEVPVKASFREGLKVSEFFISTHGARKGSTDTALKTAESGYLTRRLVDVTQDIVVIKEDCNSDRGFVVEAMISDGKEIVSLKQRIMGRFASCDICHPKTNALIIARNELITESKAQEIITAKIKKVPIRSILTCNCEYGICAKDYGVNLATNKLVEIGEAVGVIAAQSIGEPGTQLTMRTFHTGGVASASDITQGLPRIEELFEVRKPKGKALISELKGKIKKIDKIRSQNPEIVITEENDPDTEHRYILEPNVDILVSKNNSVYPGQKLTSGSVDLKELLRVAGTTEAQKYILEEVQKVYRAQNVYISDKHIEIIIHQMFKQILIIDEGDTQLLPGTEITINNFKKANLKMLEENKLLAVGRPIILGITRSSLRSDSLLSAASFQETTKILIDAAIKGKTDHLYGLKENVIIGGLIPAGTGILETTLFKYPKEPATTSELAEKTNQN</sequence>
<keyword id="KW-0240">DNA-directed RNA polymerase</keyword>
<keyword id="KW-0460">Magnesium</keyword>
<keyword id="KW-0479">Metal-binding</keyword>
<keyword id="KW-0548">Nucleotidyltransferase</keyword>
<keyword id="KW-0804">Transcription</keyword>
<keyword id="KW-0808">Transferase</keyword>
<keyword id="KW-0862">Zinc</keyword>
<comment type="function">
    <text evidence="1">DNA-dependent RNA polymerase catalyzes the transcription of DNA into RNA using the four ribonucleoside triphosphates as substrates.</text>
</comment>
<comment type="catalytic activity">
    <reaction evidence="1">
        <text>RNA(n) + a ribonucleoside 5'-triphosphate = RNA(n+1) + diphosphate</text>
        <dbReference type="Rhea" id="RHEA:21248"/>
        <dbReference type="Rhea" id="RHEA-COMP:14527"/>
        <dbReference type="Rhea" id="RHEA-COMP:17342"/>
        <dbReference type="ChEBI" id="CHEBI:33019"/>
        <dbReference type="ChEBI" id="CHEBI:61557"/>
        <dbReference type="ChEBI" id="CHEBI:140395"/>
        <dbReference type="EC" id="2.7.7.6"/>
    </reaction>
</comment>
<comment type="cofactor">
    <cofactor evidence="1">
        <name>Mg(2+)</name>
        <dbReference type="ChEBI" id="CHEBI:18420"/>
    </cofactor>
    <text evidence="1">Binds 1 Mg(2+) ion per subunit.</text>
</comment>
<comment type="cofactor">
    <cofactor evidence="1">
        <name>Zn(2+)</name>
        <dbReference type="ChEBI" id="CHEBI:29105"/>
    </cofactor>
    <text evidence="2">Binds 1 Zn(2+) ion per subunit; 2 are expected compared to other organisms.</text>
</comment>
<comment type="subunit">
    <text evidence="1">The RNAP catalytic core consists of 2 alpha, 1 beta, 1 beta' and 1 omega subunit. When a sigma factor is associated with the core the holoenzyme is formed, which can initiate transcription.</text>
</comment>
<comment type="similarity">
    <text evidence="1 2">Belongs to the RNA polymerase beta' chain family.</text>
</comment>
<reference key="1">
    <citation type="journal article" date="2004" name="Nat. Genet.">
        <title>Reductive evolution suggested from the complete genome sequence of a plant-pathogenic phytoplasma.</title>
        <authorList>
            <person name="Oshima K."/>
            <person name="Kakizawa S."/>
            <person name="Nishigawa H."/>
            <person name="Jung H.-Y."/>
            <person name="Wei W."/>
            <person name="Suzuki S."/>
            <person name="Arashida R."/>
            <person name="Nakata D."/>
            <person name="Miyata S."/>
            <person name="Ugaki M."/>
            <person name="Namba S."/>
        </authorList>
    </citation>
    <scope>NUCLEOTIDE SEQUENCE [LARGE SCALE GENOMIC DNA]</scope>
    <source>
        <strain>OY-M</strain>
    </source>
</reference>
<organism>
    <name type="scientific">Onion yellows phytoplasma (strain OY-M)</name>
    <dbReference type="NCBI Taxonomy" id="262768"/>
    <lineage>
        <taxon>Bacteria</taxon>
        <taxon>Bacillati</taxon>
        <taxon>Mycoplasmatota</taxon>
        <taxon>Mollicutes</taxon>
        <taxon>Acholeplasmatales</taxon>
        <taxon>Acholeplasmataceae</taxon>
        <taxon>Candidatus Phytoplasma</taxon>
        <taxon>16SrI (Aster yellows group)</taxon>
    </lineage>
</organism>
<protein>
    <recommendedName>
        <fullName evidence="1">DNA-directed RNA polymerase subunit beta'</fullName>
        <shortName evidence="1">RNAP subunit beta'</shortName>
        <ecNumber evidence="1">2.7.7.6</ecNumber>
    </recommendedName>
    <alternativeName>
        <fullName evidence="1">RNA polymerase subunit beta'</fullName>
    </alternativeName>
    <alternativeName>
        <fullName evidence="1">Transcriptase subunit beta'</fullName>
    </alternativeName>
</protein>
<accession>Q6YQW2</accession>
<proteinExistence type="inferred from homology"/>
<feature type="chain" id="PRO_0000240813" description="DNA-directed RNA polymerase subunit beta'">
    <location>
        <begin position="1"/>
        <end position="1353"/>
    </location>
</feature>
<feature type="region of interest" description="Unknown">
    <location>
        <begin position="1"/>
        <end position="117"/>
    </location>
</feature>
<feature type="region of interest" description="DNA-directed RNA polymerase subunit beta'">
    <location>
        <begin position="118"/>
        <end position="1353"/>
    </location>
</feature>
<feature type="binding site" evidence="1">
    <location>
        <position position="189"/>
    </location>
    <ligand>
        <name>Zn(2+)</name>
        <dbReference type="ChEBI" id="CHEBI:29105"/>
    </ligand>
</feature>
<feature type="binding site" evidence="1">
    <location>
        <position position="191"/>
    </location>
    <ligand>
        <name>Zn(2+)</name>
        <dbReference type="ChEBI" id="CHEBI:29105"/>
    </ligand>
</feature>
<feature type="binding site" evidence="1">
    <location>
        <position position="203"/>
    </location>
    <ligand>
        <name>Zn(2+)</name>
        <dbReference type="ChEBI" id="CHEBI:29105"/>
    </ligand>
</feature>
<feature type="binding site" evidence="1">
    <location>
        <position position="206"/>
    </location>
    <ligand>
        <name>Zn(2+)</name>
        <dbReference type="ChEBI" id="CHEBI:29105"/>
    </ligand>
</feature>
<feature type="binding site" evidence="1">
    <location>
        <position position="578"/>
    </location>
    <ligand>
        <name>Mg(2+)</name>
        <dbReference type="ChEBI" id="CHEBI:18420"/>
    </ligand>
</feature>
<feature type="binding site" evidence="1">
    <location>
        <position position="580"/>
    </location>
    <ligand>
        <name>Mg(2+)</name>
        <dbReference type="ChEBI" id="CHEBI:18420"/>
    </ligand>
</feature>
<feature type="binding site" evidence="1">
    <location>
        <position position="582"/>
    </location>
    <ligand>
        <name>Mg(2+)</name>
        <dbReference type="ChEBI" id="CHEBI:18420"/>
    </ligand>
</feature>
<name>RPOC_ONYPE</name>
<gene>
    <name evidence="1" type="primary">rpoC</name>
    <name type="ordered locus">PAM_261</name>
</gene>
<evidence type="ECO:0000255" key="1">
    <source>
        <dbReference type="HAMAP-Rule" id="MF_01322"/>
    </source>
</evidence>
<evidence type="ECO:0000305" key="2"/>
<dbReference type="EC" id="2.7.7.6" evidence="1"/>
<dbReference type="EMBL" id="AP006628">
    <property type="protein sequence ID" value="BAD04346.1"/>
    <property type="molecule type" value="Genomic_DNA"/>
</dbReference>
<dbReference type="SMR" id="Q6YQW2"/>
<dbReference type="STRING" id="262768.PAM_261"/>
<dbReference type="KEGG" id="poy:PAM_261"/>
<dbReference type="eggNOG" id="COG0086">
    <property type="taxonomic scope" value="Bacteria"/>
</dbReference>
<dbReference type="HOGENOM" id="CLU_000524_3_0_14"/>
<dbReference type="BioCyc" id="OYEL262768:G1G26-318-MONOMER"/>
<dbReference type="Proteomes" id="UP000002523">
    <property type="component" value="Chromosome"/>
</dbReference>
<dbReference type="GO" id="GO:0000428">
    <property type="term" value="C:DNA-directed RNA polymerase complex"/>
    <property type="evidence" value="ECO:0007669"/>
    <property type="project" value="UniProtKB-KW"/>
</dbReference>
<dbReference type="GO" id="GO:0003677">
    <property type="term" value="F:DNA binding"/>
    <property type="evidence" value="ECO:0007669"/>
    <property type="project" value="UniProtKB-UniRule"/>
</dbReference>
<dbReference type="GO" id="GO:0003899">
    <property type="term" value="F:DNA-directed RNA polymerase activity"/>
    <property type="evidence" value="ECO:0007669"/>
    <property type="project" value="UniProtKB-UniRule"/>
</dbReference>
<dbReference type="GO" id="GO:0000287">
    <property type="term" value="F:magnesium ion binding"/>
    <property type="evidence" value="ECO:0007669"/>
    <property type="project" value="UniProtKB-UniRule"/>
</dbReference>
<dbReference type="GO" id="GO:0008270">
    <property type="term" value="F:zinc ion binding"/>
    <property type="evidence" value="ECO:0007669"/>
    <property type="project" value="UniProtKB-UniRule"/>
</dbReference>
<dbReference type="GO" id="GO:0006351">
    <property type="term" value="P:DNA-templated transcription"/>
    <property type="evidence" value="ECO:0007669"/>
    <property type="project" value="UniProtKB-UniRule"/>
</dbReference>
<dbReference type="CDD" id="cd02655">
    <property type="entry name" value="RNAP_beta'_C"/>
    <property type="match status" value="1"/>
</dbReference>
<dbReference type="CDD" id="cd01609">
    <property type="entry name" value="RNAP_beta'_N"/>
    <property type="match status" value="1"/>
</dbReference>
<dbReference type="Gene3D" id="1.10.132.30">
    <property type="match status" value="1"/>
</dbReference>
<dbReference type="Gene3D" id="1.10.150.390">
    <property type="match status" value="1"/>
</dbReference>
<dbReference type="Gene3D" id="1.10.1790.20">
    <property type="match status" value="1"/>
</dbReference>
<dbReference type="Gene3D" id="1.10.40.90">
    <property type="match status" value="1"/>
</dbReference>
<dbReference type="Gene3D" id="2.40.40.20">
    <property type="match status" value="1"/>
</dbReference>
<dbReference type="Gene3D" id="2.40.50.100">
    <property type="match status" value="1"/>
</dbReference>
<dbReference type="Gene3D" id="4.10.860.120">
    <property type="entry name" value="RNA polymerase II, clamp domain"/>
    <property type="match status" value="1"/>
</dbReference>
<dbReference type="Gene3D" id="1.10.274.100">
    <property type="entry name" value="RNA polymerase Rpb1, domain 3"/>
    <property type="match status" value="1"/>
</dbReference>
<dbReference type="HAMAP" id="MF_01322">
    <property type="entry name" value="RNApol_bact_RpoC"/>
    <property type="match status" value="1"/>
</dbReference>
<dbReference type="InterPro" id="IPR045867">
    <property type="entry name" value="DNA-dir_RpoC_beta_prime"/>
</dbReference>
<dbReference type="InterPro" id="IPR012754">
    <property type="entry name" value="DNA-dir_RpoC_beta_prime_bact"/>
</dbReference>
<dbReference type="InterPro" id="IPR000722">
    <property type="entry name" value="RNA_pol_asu"/>
</dbReference>
<dbReference type="InterPro" id="IPR006592">
    <property type="entry name" value="RNA_pol_N"/>
</dbReference>
<dbReference type="InterPro" id="IPR007080">
    <property type="entry name" value="RNA_pol_Rpb1_1"/>
</dbReference>
<dbReference type="InterPro" id="IPR007066">
    <property type="entry name" value="RNA_pol_Rpb1_3"/>
</dbReference>
<dbReference type="InterPro" id="IPR042102">
    <property type="entry name" value="RNA_pol_Rpb1_3_sf"/>
</dbReference>
<dbReference type="InterPro" id="IPR007083">
    <property type="entry name" value="RNA_pol_Rpb1_4"/>
</dbReference>
<dbReference type="InterPro" id="IPR007081">
    <property type="entry name" value="RNA_pol_Rpb1_5"/>
</dbReference>
<dbReference type="InterPro" id="IPR044893">
    <property type="entry name" value="RNA_pol_Rpb1_clamp_domain"/>
</dbReference>
<dbReference type="InterPro" id="IPR038120">
    <property type="entry name" value="Rpb1_funnel_sf"/>
</dbReference>
<dbReference type="NCBIfam" id="TIGR02386">
    <property type="entry name" value="rpoC_TIGR"/>
    <property type="match status" value="1"/>
</dbReference>
<dbReference type="PANTHER" id="PTHR19376">
    <property type="entry name" value="DNA-DIRECTED RNA POLYMERASE"/>
    <property type="match status" value="1"/>
</dbReference>
<dbReference type="PANTHER" id="PTHR19376:SF54">
    <property type="entry name" value="DNA-DIRECTED RNA POLYMERASE SUBUNIT BETA"/>
    <property type="match status" value="1"/>
</dbReference>
<dbReference type="Pfam" id="PF04997">
    <property type="entry name" value="RNA_pol_Rpb1_1"/>
    <property type="match status" value="1"/>
</dbReference>
<dbReference type="Pfam" id="PF00623">
    <property type="entry name" value="RNA_pol_Rpb1_2"/>
    <property type="match status" value="2"/>
</dbReference>
<dbReference type="Pfam" id="PF04983">
    <property type="entry name" value="RNA_pol_Rpb1_3"/>
    <property type="match status" value="1"/>
</dbReference>
<dbReference type="Pfam" id="PF05000">
    <property type="entry name" value="RNA_pol_Rpb1_4"/>
    <property type="match status" value="1"/>
</dbReference>
<dbReference type="Pfam" id="PF04998">
    <property type="entry name" value="RNA_pol_Rpb1_5"/>
    <property type="match status" value="1"/>
</dbReference>
<dbReference type="SMART" id="SM00663">
    <property type="entry name" value="RPOLA_N"/>
    <property type="match status" value="1"/>
</dbReference>
<dbReference type="SUPFAM" id="SSF64484">
    <property type="entry name" value="beta and beta-prime subunits of DNA dependent RNA-polymerase"/>
    <property type="match status" value="1"/>
</dbReference>